<protein>
    <recommendedName>
        <fullName evidence="1">Chaperone protein HtpG</fullName>
    </recommendedName>
    <alternativeName>
        <fullName evidence="1">Heat shock protein HtpG</fullName>
    </alternativeName>
    <alternativeName>
        <fullName evidence="1">High temperature protein G</fullName>
    </alternativeName>
</protein>
<feature type="chain" id="PRO_1000072455" description="Chaperone protein HtpG">
    <location>
        <begin position="1"/>
        <end position="608"/>
    </location>
</feature>
<feature type="region of interest" description="A; substrate-binding" evidence="1">
    <location>
        <begin position="1"/>
        <end position="332"/>
    </location>
</feature>
<feature type="region of interest" description="B" evidence="1">
    <location>
        <begin position="333"/>
        <end position="536"/>
    </location>
</feature>
<feature type="region of interest" description="C" evidence="1">
    <location>
        <begin position="537"/>
        <end position="608"/>
    </location>
</feature>
<reference key="1">
    <citation type="journal article" date="2007" name="J. Bacteriol.">
        <title>The complete genome sequence of Campylobacter jejuni strain 81116 (NCTC11828).</title>
        <authorList>
            <person name="Pearson B.M."/>
            <person name="Gaskin D.J.H."/>
            <person name="Segers R.P.A.M."/>
            <person name="Wells J.M."/>
            <person name="Nuijten P.J.M."/>
            <person name="van Vliet A.H.M."/>
        </authorList>
    </citation>
    <scope>NUCLEOTIDE SEQUENCE [LARGE SCALE GENOMIC DNA]</scope>
    <source>
        <strain>81116 / NCTC 11828</strain>
    </source>
</reference>
<gene>
    <name evidence="1" type="primary">htpG</name>
    <name type="ordered locus">C8J_0482</name>
</gene>
<comment type="function">
    <text evidence="1">Molecular chaperone. Has ATPase activity.</text>
</comment>
<comment type="subunit">
    <text evidence="1">Homodimer.</text>
</comment>
<comment type="subcellular location">
    <subcellularLocation>
        <location evidence="1">Cytoplasm</location>
    </subcellularLocation>
</comment>
<comment type="similarity">
    <text evidence="1">Belongs to the heat shock protein 90 family.</text>
</comment>
<name>HTPG_CAMJ8</name>
<keyword id="KW-0067">ATP-binding</keyword>
<keyword id="KW-0143">Chaperone</keyword>
<keyword id="KW-0963">Cytoplasm</keyword>
<keyword id="KW-0547">Nucleotide-binding</keyword>
<keyword id="KW-0346">Stress response</keyword>
<evidence type="ECO:0000255" key="1">
    <source>
        <dbReference type="HAMAP-Rule" id="MF_00505"/>
    </source>
</evidence>
<accession>A8FKU4</accession>
<dbReference type="EMBL" id="CP000814">
    <property type="protein sequence ID" value="ABV52081.1"/>
    <property type="molecule type" value="Genomic_DNA"/>
</dbReference>
<dbReference type="RefSeq" id="WP_002866408.1">
    <property type="nucleotide sequence ID" value="NC_009839.1"/>
</dbReference>
<dbReference type="SMR" id="A8FKU4"/>
<dbReference type="KEGG" id="cju:C8J_0482"/>
<dbReference type="HOGENOM" id="CLU_006684_3_0_7"/>
<dbReference type="GO" id="GO:0005737">
    <property type="term" value="C:cytoplasm"/>
    <property type="evidence" value="ECO:0007669"/>
    <property type="project" value="UniProtKB-SubCell"/>
</dbReference>
<dbReference type="GO" id="GO:0005524">
    <property type="term" value="F:ATP binding"/>
    <property type="evidence" value="ECO:0007669"/>
    <property type="project" value="UniProtKB-UniRule"/>
</dbReference>
<dbReference type="GO" id="GO:0016887">
    <property type="term" value="F:ATP hydrolysis activity"/>
    <property type="evidence" value="ECO:0007669"/>
    <property type="project" value="InterPro"/>
</dbReference>
<dbReference type="GO" id="GO:0140662">
    <property type="term" value="F:ATP-dependent protein folding chaperone"/>
    <property type="evidence" value="ECO:0007669"/>
    <property type="project" value="InterPro"/>
</dbReference>
<dbReference type="GO" id="GO:0051082">
    <property type="term" value="F:unfolded protein binding"/>
    <property type="evidence" value="ECO:0007669"/>
    <property type="project" value="UniProtKB-UniRule"/>
</dbReference>
<dbReference type="CDD" id="cd16927">
    <property type="entry name" value="HATPase_Hsp90-like"/>
    <property type="match status" value="1"/>
</dbReference>
<dbReference type="FunFam" id="3.30.565.10:FF:000009">
    <property type="entry name" value="Molecular chaperone HtpG"/>
    <property type="match status" value="1"/>
</dbReference>
<dbReference type="Gene3D" id="3.30.230.80">
    <property type="match status" value="1"/>
</dbReference>
<dbReference type="Gene3D" id="3.40.50.11260">
    <property type="match status" value="1"/>
</dbReference>
<dbReference type="Gene3D" id="1.20.120.790">
    <property type="entry name" value="Heat shock protein 90, C-terminal domain"/>
    <property type="match status" value="1"/>
</dbReference>
<dbReference type="Gene3D" id="3.30.565.10">
    <property type="entry name" value="Histidine kinase-like ATPase, C-terminal domain"/>
    <property type="match status" value="1"/>
</dbReference>
<dbReference type="HAMAP" id="MF_00505">
    <property type="entry name" value="HSP90"/>
    <property type="match status" value="1"/>
</dbReference>
<dbReference type="InterPro" id="IPR036890">
    <property type="entry name" value="HATPase_C_sf"/>
</dbReference>
<dbReference type="InterPro" id="IPR019805">
    <property type="entry name" value="Heat_shock_protein_90_CS"/>
</dbReference>
<dbReference type="InterPro" id="IPR037196">
    <property type="entry name" value="HSP90_C"/>
</dbReference>
<dbReference type="InterPro" id="IPR001404">
    <property type="entry name" value="Hsp90_fam"/>
</dbReference>
<dbReference type="InterPro" id="IPR020575">
    <property type="entry name" value="Hsp90_N"/>
</dbReference>
<dbReference type="InterPro" id="IPR020568">
    <property type="entry name" value="Ribosomal_Su5_D2-typ_SF"/>
</dbReference>
<dbReference type="NCBIfam" id="NF003555">
    <property type="entry name" value="PRK05218.1"/>
    <property type="match status" value="1"/>
</dbReference>
<dbReference type="PANTHER" id="PTHR11528">
    <property type="entry name" value="HEAT SHOCK PROTEIN 90 FAMILY MEMBER"/>
    <property type="match status" value="1"/>
</dbReference>
<dbReference type="Pfam" id="PF13589">
    <property type="entry name" value="HATPase_c_3"/>
    <property type="match status" value="1"/>
</dbReference>
<dbReference type="Pfam" id="PF00183">
    <property type="entry name" value="HSP90"/>
    <property type="match status" value="1"/>
</dbReference>
<dbReference type="PIRSF" id="PIRSF002583">
    <property type="entry name" value="Hsp90"/>
    <property type="match status" value="1"/>
</dbReference>
<dbReference type="PRINTS" id="PR00775">
    <property type="entry name" value="HEATSHOCK90"/>
</dbReference>
<dbReference type="SMART" id="SM00387">
    <property type="entry name" value="HATPase_c"/>
    <property type="match status" value="1"/>
</dbReference>
<dbReference type="SUPFAM" id="SSF55874">
    <property type="entry name" value="ATPase domain of HSP90 chaperone/DNA topoisomerase II/histidine kinase"/>
    <property type="match status" value="1"/>
</dbReference>
<dbReference type="SUPFAM" id="SSF110942">
    <property type="entry name" value="HSP90 C-terminal domain"/>
    <property type="match status" value="1"/>
</dbReference>
<dbReference type="SUPFAM" id="SSF54211">
    <property type="entry name" value="Ribosomal protein S5 domain 2-like"/>
    <property type="match status" value="1"/>
</dbReference>
<dbReference type="PROSITE" id="PS00298">
    <property type="entry name" value="HSP90"/>
    <property type="match status" value="1"/>
</dbReference>
<organism>
    <name type="scientific">Campylobacter jejuni subsp. jejuni serotype O:6 (strain 81116 / NCTC 11828)</name>
    <dbReference type="NCBI Taxonomy" id="407148"/>
    <lineage>
        <taxon>Bacteria</taxon>
        <taxon>Pseudomonadati</taxon>
        <taxon>Campylobacterota</taxon>
        <taxon>Epsilonproteobacteria</taxon>
        <taxon>Campylobacterales</taxon>
        <taxon>Campylobacteraceae</taxon>
        <taxon>Campylobacter</taxon>
    </lineage>
</organism>
<proteinExistence type="inferred from homology"/>
<sequence length="608" mass="69681">MQFQTEVNQLLQLMIHSLYSNKEIFLRELISNASDALDKLNFLSVSDDKYKSLKFEPKIEIKIDKDKKTLSISDNGIGMDKDDLINNLGTIAKSGTKSFLENLSGDAKKDSQLIGQFGVGFYSAFMVASKIEVLSKKALDDKAYLWSSDANGYEINDANKEEQGTSITLYLKDDEFANTYKIESIIEKYSNHIQFPIFMEKEEFTPAKEGEEEGKTELKISQINKANALWRMQKSSLKVEDYERFYEQNFHDSNKPLLYLHTKSEGKLEYNSLFFIPQNAPFDLFRVDYQSGLKLYVKRVFISDDDKELLPTYLRFVRGIIDVEDLPLNVSREILQENQILKGVKEASVKKILGELEKLKNNDKEKYLSFFKTFGKVLKEGLYGFGGEKDSLLKLMLYKSTKGENLRSLEEYKNDLQGEQKEIFYIAGNNESLLRTSPLLEEYKQKNIEVLLMDDEIDSLVTPMLEFEGLKFVAINQVEDKNELSDEEKNTFAPLVAKFKELLKDQVEDVRLTSRLKDSPSCIVYDKNKPDFAMQQLLKQMGQEQNFKPILEINPKHAIFTGLKNNESFSADIATLVLNMAKLSEGMGVDNPAEFNASLTKIINKAFS</sequence>